<gene>
    <name evidence="1" type="primary">pdxY</name>
    <name type="ordered locus">Asuc_1126</name>
</gene>
<reference key="1">
    <citation type="journal article" date="2010" name="BMC Genomics">
        <title>A genomic perspective on the potential of Actinobacillus succinogenes for industrial succinate production.</title>
        <authorList>
            <person name="McKinlay J.B."/>
            <person name="Laivenieks M."/>
            <person name="Schindler B.D."/>
            <person name="McKinlay A.A."/>
            <person name="Siddaramappa S."/>
            <person name="Challacombe J.F."/>
            <person name="Lowry S.R."/>
            <person name="Clum A."/>
            <person name="Lapidus A.L."/>
            <person name="Burkhart K.B."/>
            <person name="Harkins V."/>
            <person name="Vieille C."/>
        </authorList>
    </citation>
    <scope>NUCLEOTIDE SEQUENCE [LARGE SCALE GENOMIC DNA]</scope>
    <source>
        <strain>ATCC 55618 / DSM 22257 / CCUG 43843 / 130Z</strain>
    </source>
</reference>
<evidence type="ECO:0000255" key="1">
    <source>
        <dbReference type="HAMAP-Rule" id="MF_01639"/>
    </source>
</evidence>
<name>PDXY_ACTSZ</name>
<organism>
    <name type="scientific">Actinobacillus succinogenes (strain ATCC 55618 / DSM 22257 / CCUG 43843 / 130Z)</name>
    <dbReference type="NCBI Taxonomy" id="339671"/>
    <lineage>
        <taxon>Bacteria</taxon>
        <taxon>Pseudomonadati</taxon>
        <taxon>Pseudomonadota</taxon>
        <taxon>Gammaproteobacteria</taxon>
        <taxon>Pasteurellales</taxon>
        <taxon>Pasteurellaceae</taxon>
        <taxon>Actinobacillus</taxon>
    </lineage>
</organism>
<protein>
    <recommendedName>
        <fullName evidence="1">Pyridoxal kinase PdxY</fullName>
        <shortName evidence="1">PL kinase</shortName>
        <ecNumber evidence="1">2.7.1.35</ecNumber>
    </recommendedName>
</protein>
<dbReference type="EC" id="2.7.1.35" evidence="1"/>
<dbReference type="EMBL" id="CP000746">
    <property type="protein sequence ID" value="ABR74492.1"/>
    <property type="molecule type" value="Genomic_DNA"/>
</dbReference>
<dbReference type="RefSeq" id="WP_012072869.1">
    <property type="nucleotide sequence ID" value="NC_009655.1"/>
</dbReference>
<dbReference type="SMR" id="A6VNE5"/>
<dbReference type="STRING" id="339671.Asuc_1126"/>
<dbReference type="KEGG" id="asu:Asuc_1126"/>
<dbReference type="eggNOG" id="COG2240">
    <property type="taxonomic scope" value="Bacteria"/>
</dbReference>
<dbReference type="HOGENOM" id="CLU_046496_3_0_6"/>
<dbReference type="OrthoDB" id="9800808at2"/>
<dbReference type="UniPathway" id="UPA01068">
    <property type="reaction ID" value="UER00298"/>
</dbReference>
<dbReference type="Proteomes" id="UP000001114">
    <property type="component" value="Chromosome"/>
</dbReference>
<dbReference type="GO" id="GO:0005829">
    <property type="term" value="C:cytosol"/>
    <property type="evidence" value="ECO:0007669"/>
    <property type="project" value="TreeGrafter"/>
</dbReference>
<dbReference type="GO" id="GO:0005524">
    <property type="term" value="F:ATP binding"/>
    <property type="evidence" value="ECO:0007669"/>
    <property type="project" value="UniProtKB-UniRule"/>
</dbReference>
<dbReference type="GO" id="GO:0000287">
    <property type="term" value="F:magnesium ion binding"/>
    <property type="evidence" value="ECO:0007669"/>
    <property type="project" value="UniProtKB-UniRule"/>
</dbReference>
<dbReference type="GO" id="GO:0008478">
    <property type="term" value="F:pyridoxal kinase activity"/>
    <property type="evidence" value="ECO:0007669"/>
    <property type="project" value="UniProtKB-UniRule"/>
</dbReference>
<dbReference type="GO" id="GO:0009443">
    <property type="term" value="P:pyridoxal 5'-phosphate salvage"/>
    <property type="evidence" value="ECO:0007669"/>
    <property type="project" value="UniProtKB-UniRule"/>
</dbReference>
<dbReference type="CDD" id="cd01173">
    <property type="entry name" value="pyridoxal_pyridoxamine_kinase"/>
    <property type="match status" value="1"/>
</dbReference>
<dbReference type="FunFam" id="3.40.1190.20:FF:000008">
    <property type="entry name" value="Pyridoxal kinase PdxY"/>
    <property type="match status" value="1"/>
</dbReference>
<dbReference type="Gene3D" id="3.40.1190.20">
    <property type="match status" value="1"/>
</dbReference>
<dbReference type="HAMAP" id="MF_01639">
    <property type="entry name" value="PdxY"/>
    <property type="match status" value="1"/>
</dbReference>
<dbReference type="InterPro" id="IPR013749">
    <property type="entry name" value="PM/HMP-P_kinase-1"/>
</dbReference>
<dbReference type="InterPro" id="IPR004625">
    <property type="entry name" value="PyrdxlKinase"/>
</dbReference>
<dbReference type="InterPro" id="IPR023685">
    <property type="entry name" value="Pyridoxal_kinase_PdxY"/>
</dbReference>
<dbReference type="InterPro" id="IPR029056">
    <property type="entry name" value="Ribokinase-like"/>
</dbReference>
<dbReference type="NCBIfam" id="NF004398">
    <property type="entry name" value="PRK05756.1"/>
    <property type="match status" value="1"/>
</dbReference>
<dbReference type="NCBIfam" id="TIGR00687">
    <property type="entry name" value="pyridox_kin"/>
    <property type="match status" value="1"/>
</dbReference>
<dbReference type="PANTHER" id="PTHR10534">
    <property type="entry name" value="PYRIDOXAL KINASE"/>
    <property type="match status" value="1"/>
</dbReference>
<dbReference type="PANTHER" id="PTHR10534:SF2">
    <property type="entry name" value="PYRIDOXAL KINASE"/>
    <property type="match status" value="1"/>
</dbReference>
<dbReference type="Pfam" id="PF08543">
    <property type="entry name" value="Phos_pyr_kin"/>
    <property type="match status" value="1"/>
</dbReference>
<dbReference type="SUPFAM" id="SSF53613">
    <property type="entry name" value="Ribokinase-like"/>
    <property type="match status" value="1"/>
</dbReference>
<accession>A6VNE5</accession>
<sequence length="286" mass="30975">MKNVLSIQSHVVFGYAGNKSSTFPMQLSGIDVWALNTVQFSNHTQYGKWTGMVVPHQQIPEIADGIDAIGELKNCDAVLSGYIGSADQVAEIVKVSHLVKTRNAAALYLCDPVMGSAEKGCVVADGVREGLIDIALPQADIITPNLLELRELSGLRAENFEQAVIAAQHLLTKGPKTVIVKHLGSAGKYPGKFDMLLANREGVWCLSRPLYPFAKDPVGVGDLIAGLFLANLLNGKSEPEAFELTGNAVNDVMEITHKLNSYELQLIEARHAIMAPQNRYKAEKIA</sequence>
<feature type="chain" id="PRO_1000073657" description="Pyridoxal kinase PdxY">
    <location>
        <begin position="1"/>
        <end position="286"/>
    </location>
</feature>
<feature type="binding site" evidence="1">
    <location>
        <position position="9"/>
    </location>
    <ligand>
        <name>substrate</name>
    </ligand>
</feature>
<feature type="binding site" evidence="1">
    <location>
        <begin position="44"/>
        <end position="45"/>
    </location>
    <ligand>
        <name>substrate</name>
    </ligand>
</feature>
<feature type="binding site" evidence="1">
    <location>
        <position position="111"/>
    </location>
    <ligand>
        <name>ATP</name>
        <dbReference type="ChEBI" id="CHEBI:30616"/>
    </ligand>
</feature>
<feature type="binding site" evidence="1">
    <location>
        <position position="148"/>
    </location>
    <ligand>
        <name>ATP</name>
        <dbReference type="ChEBI" id="CHEBI:30616"/>
    </ligand>
</feature>
<feature type="binding site" evidence="1">
    <location>
        <position position="181"/>
    </location>
    <ligand>
        <name>ATP</name>
        <dbReference type="ChEBI" id="CHEBI:30616"/>
    </ligand>
</feature>
<feature type="binding site" evidence="1">
    <location>
        <position position="222"/>
    </location>
    <ligand>
        <name>substrate</name>
    </ligand>
</feature>
<keyword id="KW-0067">ATP-binding</keyword>
<keyword id="KW-0418">Kinase</keyword>
<keyword id="KW-0460">Magnesium</keyword>
<keyword id="KW-0547">Nucleotide-binding</keyword>
<keyword id="KW-1185">Reference proteome</keyword>
<keyword id="KW-0808">Transferase</keyword>
<proteinExistence type="inferred from homology"/>
<comment type="function">
    <text evidence="1">Pyridoxal kinase involved in the salvage pathway of pyridoxal 5'-phosphate (PLP). Catalyzes the phosphorylation of pyridoxal to PLP.</text>
</comment>
<comment type="catalytic activity">
    <reaction evidence="1">
        <text>pyridoxal + ATP = pyridoxal 5'-phosphate + ADP + H(+)</text>
        <dbReference type="Rhea" id="RHEA:10224"/>
        <dbReference type="ChEBI" id="CHEBI:15378"/>
        <dbReference type="ChEBI" id="CHEBI:17310"/>
        <dbReference type="ChEBI" id="CHEBI:30616"/>
        <dbReference type="ChEBI" id="CHEBI:456216"/>
        <dbReference type="ChEBI" id="CHEBI:597326"/>
        <dbReference type="EC" id="2.7.1.35"/>
    </reaction>
</comment>
<comment type="cofactor">
    <cofactor evidence="1">
        <name>Mg(2+)</name>
        <dbReference type="ChEBI" id="CHEBI:18420"/>
    </cofactor>
</comment>
<comment type="pathway">
    <text evidence="1">Cofactor metabolism; pyridoxal 5'-phosphate salvage; pyridoxal 5'-phosphate from pyridoxal: step 1/1.</text>
</comment>
<comment type="subunit">
    <text evidence="1">Homodimer.</text>
</comment>
<comment type="similarity">
    <text evidence="1">Belongs to the pyridoxine kinase family. PdxY subfamily.</text>
</comment>